<keyword id="KW-0067">ATP-binding</keyword>
<keyword id="KW-0315">Glutamine amidotransferase</keyword>
<keyword id="KW-0332">GMP biosynthesis</keyword>
<keyword id="KW-0436">Ligase</keyword>
<keyword id="KW-0547">Nucleotide-binding</keyword>
<keyword id="KW-0658">Purine biosynthesis</keyword>
<keyword id="KW-1185">Reference proteome</keyword>
<accession>C6BSD8</accession>
<comment type="function">
    <text evidence="1">Catalyzes the synthesis of GMP from XMP.</text>
</comment>
<comment type="catalytic activity">
    <reaction evidence="1">
        <text>XMP + L-glutamine + ATP + H2O = GMP + L-glutamate + AMP + diphosphate + 2 H(+)</text>
        <dbReference type="Rhea" id="RHEA:11680"/>
        <dbReference type="ChEBI" id="CHEBI:15377"/>
        <dbReference type="ChEBI" id="CHEBI:15378"/>
        <dbReference type="ChEBI" id="CHEBI:29985"/>
        <dbReference type="ChEBI" id="CHEBI:30616"/>
        <dbReference type="ChEBI" id="CHEBI:33019"/>
        <dbReference type="ChEBI" id="CHEBI:57464"/>
        <dbReference type="ChEBI" id="CHEBI:58115"/>
        <dbReference type="ChEBI" id="CHEBI:58359"/>
        <dbReference type="ChEBI" id="CHEBI:456215"/>
        <dbReference type="EC" id="6.3.5.2"/>
    </reaction>
</comment>
<comment type="pathway">
    <text evidence="1">Purine metabolism; GMP biosynthesis; GMP from XMP (L-Gln route): step 1/1.</text>
</comment>
<comment type="subunit">
    <text evidence="1">Homodimer.</text>
</comment>
<feature type="chain" id="PRO_1000205298" description="GMP synthase [glutamine-hydrolyzing]">
    <location>
        <begin position="1"/>
        <end position="515"/>
    </location>
</feature>
<feature type="domain" description="Glutamine amidotransferase type-1" evidence="1">
    <location>
        <begin position="6"/>
        <end position="198"/>
    </location>
</feature>
<feature type="domain" description="GMPS ATP-PPase" evidence="1">
    <location>
        <begin position="199"/>
        <end position="390"/>
    </location>
</feature>
<feature type="active site" description="Nucleophile" evidence="1">
    <location>
        <position position="83"/>
    </location>
</feature>
<feature type="active site" evidence="1">
    <location>
        <position position="172"/>
    </location>
</feature>
<feature type="active site" evidence="1">
    <location>
        <position position="174"/>
    </location>
</feature>
<feature type="binding site" evidence="1">
    <location>
        <begin position="226"/>
        <end position="232"/>
    </location>
    <ligand>
        <name>ATP</name>
        <dbReference type="ChEBI" id="CHEBI:30616"/>
    </ligand>
</feature>
<proteinExistence type="inferred from homology"/>
<reference key="1">
    <citation type="submission" date="2009-06" db="EMBL/GenBank/DDBJ databases">
        <title>Complete sequence of Desulfovibrio salexigens DSM 2638.</title>
        <authorList>
            <consortium name="US DOE Joint Genome Institute"/>
            <person name="Lucas S."/>
            <person name="Copeland A."/>
            <person name="Lapidus A."/>
            <person name="Glavina del Rio T."/>
            <person name="Tice H."/>
            <person name="Bruce D."/>
            <person name="Goodwin L."/>
            <person name="Pitluck S."/>
            <person name="Munk A.C."/>
            <person name="Brettin T."/>
            <person name="Detter J.C."/>
            <person name="Han C."/>
            <person name="Tapia R."/>
            <person name="Larimer F."/>
            <person name="Land M."/>
            <person name="Hauser L."/>
            <person name="Kyrpides N."/>
            <person name="Anderson I."/>
            <person name="Wall J.D."/>
            <person name="Arkin A.P."/>
            <person name="Dehal P."/>
            <person name="Chivian D."/>
            <person name="Giles B."/>
            <person name="Hazen T.C."/>
        </authorList>
    </citation>
    <scope>NUCLEOTIDE SEQUENCE [LARGE SCALE GENOMIC DNA]</scope>
    <source>
        <strain>ATCC 14822 / DSM 2638 / NCIMB 8403 / VKM B-1763</strain>
    </source>
</reference>
<gene>
    <name evidence="1" type="primary">guaA</name>
    <name type="ordered locus">Desal_1552</name>
</gene>
<sequence>MQHDNKVIILDFGSQFTQLIARRIREAGVYSEIHPCNVDPQKIKDLNPGALILSGGPSSVLEDESPQLDPSLLELGVPVLGICYGMQLMTNDLGGRVVSSEDREYGRAEFKGDSSCTIFEGIEDIEKLTVWMSHGDRVEAIPEGFKVCGTTESIPFAAMANEEKKMYALQFHPEVAHTESGTTIINNFVFKVAGLKADWTMSSFVENCIEEMREKIGDNQVVLGLSGGIDSTVVAVLLHKAIGKRLHCIFVDNGLLRMHEREEVIGFLEEHFELNVKCVDSAELFLDKLKGVEDPEKKRKLIGYTFIDVFNEEASALKDVKFLAQGTLYPDVIESESFKGPSAVIKSHHNVGGLPEDMDLDLVEPLRELFKDEVRKVAYELGLPEFIIWRQPFPGPGLAIRVLGEITEERLEILRQADKIVQNEMHASGWYRKVWQGFAVLLPLKTVGVMGDDRTYEHVIALRIVDSIDAMTADWSRIPNDILARMSNRIINEVKGVNRVVLDISSKPPATIEWE</sequence>
<protein>
    <recommendedName>
        <fullName evidence="1">GMP synthase [glutamine-hydrolyzing]</fullName>
        <ecNumber evidence="1">6.3.5.2</ecNumber>
    </recommendedName>
    <alternativeName>
        <fullName evidence="1">GMP synthetase</fullName>
    </alternativeName>
    <alternativeName>
        <fullName evidence="1">Glutamine amidotransferase</fullName>
    </alternativeName>
</protein>
<dbReference type="EC" id="6.3.5.2" evidence="1"/>
<dbReference type="EMBL" id="CP001649">
    <property type="protein sequence ID" value="ACS79614.1"/>
    <property type="molecule type" value="Genomic_DNA"/>
</dbReference>
<dbReference type="RefSeq" id="WP_015851432.1">
    <property type="nucleotide sequence ID" value="NC_012881.1"/>
</dbReference>
<dbReference type="SMR" id="C6BSD8"/>
<dbReference type="STRING" id="526222.Desal_1552"/>
<dbReference type="MEROPS" id="C26.957"/>
<dbReference type="KEGG" id="dsa:Desal_1552"/>
<dbReference type="eggNOG" id="COG0519">
    <property type="taxonomic scope" value="Bacteria"/>
</dbReference>
<dbReference type="HOGENOM" id="CLU_014340_0_5_7"/>
<dbReference type="OrthoDB" id="9802219at2"/>
<dbReference type="UniPathway" id="UPA00189">
    <property type="reaction ID" value="UER00296"/>
</dbReference>
<dbReference type="Proteomes" id="UP000002601">
    <property type="component" value="Chromosome"/>
</dbReference>
<dbReference type="GO" id="GO:0005829">
    <property type="term" value="C:cytosol"/>
    <property type="evidence" value="ECO:0007669"/>
    <property type="project" value="TreeGrafter"/>
</dbReference>
<dbReference type="GO" id="GO:0005524">
    <property type="term" value="F:ATP binding"/>
    <property type="evidence" value="ECO:0007669"/>
    <property type="project" value="UniProtKB-UniRule"/>
</dbReference>
<dbReference type="GO" id="GO:0003921">
    <property type="term" value="F:GMP synthase activity"/>
    <property type="evidence" value="ECO:0007669"/>
    <property type="project" value="InterPro"/>
</dbReference>
<dbReference type="CDD" id="cd01742">
    <property type="entry name" value="GATase1_GMP_Synthase"/>
    <property type="match status" value="1"/>
</dbReference>
<dbReference type="CDD" id="cd01997">
    <property type="entry name" value="GMP_synthase_C"/>
    <property type="match status" value="1"/>
</dbReference>
<dbReference type="FunFam" id="3.30.300.10:FF:000002">
    <property type="entry name" value="GMP synthase [glutamine-hydrolyzing]"/>
    <property type="match status" value="1"/>
</dbReference>
<dbReference type="FunFam" id="3.40.50.620:FF:000001">
    <property type="entry name" value="GMP synthase [glutamine-hydrolyzing]"/>
    <property type="match status" value="1"/>
</dbReference>
<dbReference type="FunFam" id="3.40.50.880:FF:000001">
    <property type="entry name" value="GMP synthase [glutamine-hydrolyzing]"/>
    <property type="match status" value="1"/>
</dbReference>
<dbReference type="Gene3D" id="3.30.300.10">
    <property type="match status" value="1"/>
</dbReference>
<dbReference type="Gene3D" id="3.40.50.880">
    <property type="match status" value="1"/>
</dbReference>
<dbReference type="Gene3D" id="3.40.50.620">
    <property type="entry name" value="HUPs"/>
    <property type="match status" value="1"/>
</dbReference>
<dbReference type="HAMAP" id="MF_00344">
    <property type="entry name" value="GMP_synthase"/>
    <property type="match status" value="1"/>
</dbReference>
<dbReference type="InterPro" id="IPR029062">
    <property type="entry name" value="Class_I_gatase-like"/>
</dbReference>
<dbReference type="InterPro" id="IPR017926">
    <property type="entry name" value="GATASE"/>
</dbReference>
<dbReference type="InterPro" id="IPR001674">
    <property type="entry name" value="GMP_synth_C"/>
</dbReference>
<dbReference type="InterPro" id="IPR004739">
    <property type="entry name" value="GMP_synth_GATase"/>
</dbReference>
<dbReference type="InterPro" id="IPR022955">
    <property type="entry name" value="GMP_synthase"/>
</dbReference>
<dbReference type="InterPro" id="IPR025777">
    <property type="entry name" value="GMPS_ATP_PPase_dom"/>
</dbReference>
<dbReference type="InterPro" id="IPR022310">
    <property type="entry name" value="NAD/GMP_synthase"/>
</dbReference>
<dbReference type="InterPro" id="IPR014729">
    <property type="entry name" value="Rossmann-like_a/b/a_fold"/>
</dbReference>
<dbReference type="NCBIfam" id="TIGR00884">
    <property type="entry name" value="guaA_Cterm"/>
    <property type="match status" value="1"/>
</dbReference>
<dbReference type="NCBIfam" id="TIGR00888">
    <property type="entry name" value="guaA_Nterm"/>
    <property type="match status" value="1"/>
</dbReference>
<dbReference type="NCBIfam" id="NF000848">
    <property type="entry name" value="PRK00074.1"/>
    <property type="match status" value="1"/>
</dbReference>
<dbReference type="PANTHER" id="PTHR11922:SF2">
    <property type="entry name" value="GMP SYNTHASE [GLUTAMINE-HYDROLYZING]"/>
    <property type="match status" value="1"/>
</dbReference>
<dbReference type="PANTHER" id="PTHR11922">
    <property type="entry name" value="GMP SYNTHASE-RELATED"/>
    <property type="match status" value="1"/>
</dbReference>
<dbReference type="Pfam" id="PF00117">
    <property type="entry name" value="GATase"/>
    <property type="match status" value="1"/>
</dbReference>
<dbReference type="Pfam" id="PF00958">
    <property type="entry name" value="GMP_synt_C"/>
    <property type="match status" value="1"/>
</dbReference>
<dbReference type="Pfam" id="PF02540">
    <property type="entry name" value="NAD_synthase"/>
    <property type="match status" value="1"/>
</dbReference>
<dbReference type="PRINTS" id="PR00097">
    <property type="entry name" value="ANTSNTHASEII"/>
</dbReference>
<dbReference type="PRINTS" id="PR00096">
    <property type="entry name" value="GATASE"/>
</dbReference>
<dbReference type="SUPFAM" id="SSF52402">
    <property type="entry name" value="Adenine nucleotide alpha hydrolases-like"/>
    <property type="match status" value="1"/>
</dbReference>
<dbReference type="SUPFAM" id="SSF52317">
    <property type="entry name" value="Class I glutamine amidotransferase-like"/>
    <property type="match status" value="1"/>
</dbReference>
<dbReference type="SUPFAM" id="SSF54810">
    <property type="entry name" value="GMP synthetase C-terminal dimerisation domain"/>
    <property type="match status" value="1"/>
</dbReference>
<dbReference type="PROSITE" id="PS51273">
    <property type="entry name" value="GATASE_TYPE_1"/>
    <property type="match status" value="1"/>
</dbReference>
<dbReference type="PROSITE" id="PS51553">
    <property type="entry name" value="GMPS_ATP_PPASE"/>
    <property type="match status" value="1"/>
</dbReference>
<organism>
    <name type="scientific">Maridesulfovibrio salexigens (strain ATCC 14822 / DSM 2638 / NCIMB 8403 / VKM B-1763)</name>
    <name type="common">Desulfovibrio salexigens</name>
    <dbReference type="NCBI Taxonomy" id="526222"/>
    <lineage>
        <taxon>Bacteria</taxon>
        <taxon>Pseudomonadati</taxon>
        <taxon>Thermodesulfobacteriota</taxon>
        <taxon>Desulfovibrionia</taxon>
        <taxon>Desulfovibrionales</taxon>
        <taxon>Desulfovibrionaceae</taxon>
        <taxon>Maridesulfovibrio</taxon>
    </lineage>
</organism>
<name>GUAA_MARSD</name>
<evidence type="ECO:0000255" key="1">
    <source>
        <dbReference type="HAMAP-Rule" id="MF_00344"/>
    </source>
</evidence>